<protein>
    <recommendedName>
        <fullName evidence="1">Hypoxanthine/guanine phosphoribosyltransferase</fullName>
        <shortName evidence="1">HGPRTase</shortName>
        <ecNumber evidence="1">2.4.2.8</ecNumber>
    </recommendedName>
</protein>
<keyword id="KW-0963">Cytoplasm</keyword>
<keyword id="KW-0328">Glycosyltransferase</keyword>
<keyword id="KW-0660">Purine salvage</keyword>
<keyword id="KW-0808">Transferase</keyword>
<dbReference type="EC" id="2.4.2.8" evidence="1"/>
<dbReference type="EMBL" id="CP000745">
    <property type="protein sequence ID" value="ABR66211.1"/>
    <property type="molecule type" value="Genomic_DNA"/>
</dbReference>
<dbReference type="SMR" id="A6VID5"/>
<dbReference type="STRING" id="426368.MmarC7_1145"/>
<dbReference type="KEGG" id="mmz:MmarC7_1145"/>
<dbReference type="eggNOG" id="arCOG00030">
    <property type="taxonomic scope" value="Archaea"/>
</dbReference>
<dbReference type="HOGENOM" id="CLU_126376_0_0_2"/>
<dbReference type="OrthoDB" id="8323at2157"/>
<dbReference type="UniPathway" id="UPA00591">
    <property type="reaction ID" value="UER00648"/>
</dbReference>
<dbReference type="GO" id="GO:0005737">
    <property type="term" value="C:cytoplasm"/>
    <property type="evidence" value="ECO:0007669"/>
    <property type="project" value="UniProtKB-SubCell"/>
</dbReference>
<dbReference type="GO" id="GO:0052657">
    <property type="term" value="F:guanine phosphoribosyltransferase activity"/>
    <property type="evidence" value="ECO:0007669"/>
    <property type="project" value="RHEA"/>
</dbReference>
<dbReference type="GO" id="GO:0004422">
    <property type="term" value="F:hypoxanthine phosphoribosyltransferase activity"/>
    <property type="evidence" value="ECO:0007669"/>
    <property type="project" value="UniProtKB-UniRule"/>
</dbReference>
<dbReference type="GO" id="GO:0032264">
    <property type="term" value="P:IMP salvage"/>
    <property type="evidence" value="ECO:0007669"/>
    <property type="project" value="UniProtKB-UniRule"/>
</dbReference>
<dbReference type="GO" id="GO:0006166">
    <property type="term" value="P:purine ribonucleoside salvage"/>
    <property type="evidence" value="ECO:0007669"/>
    <property type="project" value="UniProtKB-KW"/>
</dbReference>
<dbReference type="CDD" id="cd06223">
    <property type="entry name" value="PRTases_typeI"/>
    <property type="match status" value="1"/>
</dbReference>
<dbReference type="Gene3D" id="3.40.50.2020">
    <property type="match status" value="1"/>
</dbReference>
<dbReference type="HAMAP" id="MF_01467">
    <property type="entry name" value="Hypx_phosphoribosyltr"/>
    <property type="match status" value="1"/>
</dbReference>
<dbReference type="InterPro" id="IPR026597">
    <property type="entry name" value="HGPRTase-like"/>
</dbReference>
<dbReference type="InterPro" id="IPR000836">
    <property type="entry name" value="PRibTrfase_dom"/>
</dbReference>
<dbReference type="InterPro" id="IPR029057">
    <property type="entry name" value="PRTase-like"/>
</dbReference>
<dbReference type="InterPro" id="IPR050118">
    <property type="entry name" value="Pur/Pyrimidine_PRTase"/>
</dbReference>
<dbReference type="NCBIfam" id="NF040646">
    <property type="entry name" value="HPT_Archaea"/>
    <property type="match status" value="1"/>
</dbReference>
<dbReference type="NCBIfam" id="NF002635">
    <property type="entry name" value="PRK02304.1-4"/>
    <property type="match status" value="1"/>
</dbReference>
<dbReference type="PANTHER" id="PTHR43864">
    <property type="entry name" value="HYPOXANTHINE/GUANINE PHOSPHORIBOSYLTRANSFERASE"/>
    <property type="match status" value="1"/>
</dbReference>
<dbReference type="PANTHER" id="PTHR43864:SF1">
    <property type="entry name" value="XANTHINE PHOSPHORIBOSYLTRANSFERASE"/>
    <property type="match status" value="1"/>
</dbReference>
<dbReference type="Pfam" id="PF00156">
    <property type="entry name" value="Pribosyltran"/>
    <property type="match status" value="1"/>
</dbReference>
<dbReference type="SUPFAM" id="SSF53271">
    <property type="entry name" value="PRTase-like"/>
    <property type="match status" value="1"/>
</dbReference>
<dbReference type="PROSITE" id="PS00103">
    <property type="entry name" value="PUR_PYR_PR_TRANSFER"/>
    <property type="match status" value="1"/>
</dbReference>
<accession>A6VID5</accession>
<proteinExistence type="inferred from homology"/>
<sequence>MSRLLEESLKTCPIVKRGEYHYFIHPISDGVPLVKPELLRDVSTRVIKMIDTDIDKIVTAEAMGIPIVTAVSIATDIPYVIMRKREYLLEGEIPVHQETGYSKGELYLNGINKGDKVVILDDVISTGGTLVAIINALKRAGADIKDVLCIIDRGNGQNVVEEKTGYKVKTLVKIEVVDGKVQILE</sequence>
<evidence type="ECO:0000255" key="1">
    <source>
        <dbReference type="HAMAP-Rule" id="MF_01467"/>
    </source>
</evidence>
<comment type="function">
    <text evidence="1">Catalyzes a salvage reaction resulting in the formation of IMP that is energically less costly than de novo synthesis.</text>
</comment>
<comment type="catalytic activity">
    <reaction evidence="1">
        <text>IMP + diphosphate = hypoxanthine + 5-phospho-alpha-D-ribose 1-diphosphate</text>
        <dbReference type="Rhea" id="RHEA:17973"/>
        <dbReference type="ChEBI" id="CHEBI:17368"/>
        <dbReference type="ChEBI" id="CHEBI:33019"/>
        <dbReference type="ChEBI" id="CHEBI:58017"/>
        <dbReference type="ChEBI" id="CHEBI:58053"/>
        <dbReference type="EC" id="2.4.2.8"/>
    </reaction>
</comment>
<comment type="catalytic activity">
    <reaction evidence="1">
        <text>GMP + diphosphate = guanine + 5-phospho-alpha-D-ribose 1-diphosphate</text>
        <dbReference type="Rhea" id="RHEA:25424"/>
        <dbReference type="ChEBI" id="CHEBI:16235"/>
        <dbReference type="ChEBI" id="CHEBI:33019"/>
        <dbReference type="ChEBI" id="CHEBI:58017"/>
        <dbReference type="ChEBI" id="CHEBI:58115"/>
        <dbReference type="EC" id="2.4.2.8"/>
    </reaction>
</comment>
<comment type="pathway">
    <text evidence="1">Purine metabolism; IMP biosynthesis via salvage pathway; IMP from hypoxanthine: step 1/1.</text>
</comment>
<comment type="subunit">
    <text evidence="1">Homodimer.</text>
</comment>
<comment type="subcellular location">
    <subcellularLocation>
        <location evidence="1">Cytoplasm</location>
    </subcellularLocation>
</comment>
<comment type="similarity">
    <text evidence="1">Belongs to the purine/pyrimidine phosphoribosyltransferase family. Archaeal HPRT subfamily.</text>
</comment>
<gene>
    <name evidence="1" type="primary">hpt</name>
    <name type="ordered locus">MmarC7_1145</name>
</gene>
<name>HPRT_METM7</name>
<feature type="chain" id="PRO_0000329375" description="Hypoxanthine/guanine phosphoribosyltransferase">
    <location>
        <begin position="1"/>
        <end position="185"/>
    </location>
</feature>
<organism>
    <name type="scientific">Methanococcus maripaludis (strain C7 / ATCC BAA-1331)</name>
    <dbReference type="NCBI Taxonomy" id="426368"/>
    <lineage>
        <taxon>Archaea</taxon>
        <taxon>Methanobacteriati</taxon>
        <taxon>Methanobacteriota</taxon>
        <taxon>Methanomada group</taxon>
        <taxon>Methanococci</taxon>
        <taxon>Methanococcales</taxon>
        <taxon>Methanococcaceae</taxon>
        <taxon>Methanococcus</taxon>
    </lineage>
</organism>
<reference key="1">
    <citation type="submission" date="2007-06" db="EMBL/GenBank/DDBJ databases">
        <title>Complete sequence of Methanococcus maripaludis C7.</title>
        <authorList>
            <consortium name="US DOE Joint Genome Institute"/>
            <person name="Copeland A."/>
            <person name="Lucas S."/>
            <person name="Lapidus A."/>
            <person name="Barry K."/>
            <person name="Glavina del Rio T."/>
            <person name="Dalin E."/>
            <person name="Tice H."/>
            <person name="Pitluck S."/>
            <person name="Clum A."/>
            <person name="Schmutz J."/>
            <person name="Larimer F."/>
            <person name="Land M."/>
            <person name="Hauser L."/>
            <person name="Kyrpides N."/>
            <person name="Anderson I."/>
            <person name="Sieprawska-Lupa M."/>
            <person name="Whitman W.B."/>
            <person name="Richardson P."/>
        </authorList>
    </citation>
    <scope>NUCLEOTIDE SEQUENCE [LARGE SCALE GENOMIC DNA]</scope>
    <source>
        <strain>C7 / ATCC BAA-1331</strain>
    </source>
</reference>